<proteinExistence type="evidence at transcript level"/>
<gene>
    <name type="primary">Tm4sf4</name>
    <name type="synonym">Lrtm4</name>
</gene>
<comment type="function">
    <text evidence="1">Regulates the adhesive and proliferative status of intestinal epithelial cells. Can mediate density-dependent cell proliferation (By similarity).</text>
</comment>
<comment type="subcellular location">
    <subcellularLocation>
        <location evidence="1">Membrane</location>
        <topology evidence="1">Multi-pass membrane protein</topology>
    </subcellularLocation>
</comment>
<comment type="tissue specificity">
    <text evidence="3">Expressed in liver and testis. Up-regulated in regenerating liver after partial hepatectomy.</text>
</comment>
<comment type="similarity">
    <text evidence="4">Belongs to the L6 tetraspanin family.</text>
</comment>
<accession>Q9EQL5</accession>
<dbReference type="EMBL" id="AF205717">
    <property type="protein sequence ID" value="AAG35665.1"/>
    <property type="molecule type" value="mRNA"/>
</dbReference>
<dbReference type="EMBL" id="BC091131">
    <property type="protein sequence ID" value="AAH91131.1"/>
    <property type="molecule type" value="mRNA"/>
</dbReference>
<dbReference type="RefSeq" id="NP_446237.1">
    <property type="nucleotide sequence ID" value="NM_053785.2"/>
</dbReference>
<dbReference type="RefSeq" id="XP_038957494.1">
    <property type="nucleotide sequence ID" value="XM_039101566.2"/>
</dbReference>
<dbReference type="RefSeq" id="XP_063137224.1">
    <property type="nucleotide sequence ID" value="XM_063281154.1"/>
</dbReference>
<dbReference type="RefSeq" id="XP_063137225.1">
    <property type="nucleotide sequence ID" value="XM_063281155.1"/>
</dbReference>
<dbReference type="FunCoup" id="Q9EQL5">
    <property type="interactions" value="114"/>
</dbReference>
<dbReference type="STRING" id="10116.ENSRNOP00000022105"/>
<dbReference type="GlyCosmos" id="Q9EQL5">
    <property type="glycosylation" value="1 site, No reported glycans"/>
</dbReference>
<dbReference type="GlyGen" id="Q9EQL5">
    <property type="glycosylation" value="1 site"/>
</dbReference>
<dbReference type="PhosphoSitePlus" id="Q9EQL5"/>
<dbReference type="PaxDb" id="10116-ENSRNOP00000022105"/>
<dbReference type="Ensembl" id="ENSRNOT00000022105.5">
    <property type="protein sequence ID" value="ENSRNOP00000022105.3"/>
    <property type="gene ID" value="ENSRNOG00000016437.5"/>
</dbReference>
<dbReference type="GeneID" id="116467"/>
<dbReference type="KEGG" id="rno:116467"/>
<dbReference type="UCSC" id="RGD:621784">
    <property type="organism name" value="rat"/>
</dbReference>
<dbReference type="AGR" id="RGD:621784"/>
<dbReference type="CTD" id="7104"/>
<dbReference type="RGD" id="621784">
    <property type="gene designation" value="Tm4sf4"/>
</dbReference>
<dbReference type="eggNOG" id="ENOG502QVGK">
    <property type="taxonomic scope" value="Eukaryota"/>
</dbReference>
<dbReference type="GeneTree" id="ENSGT01030000234590"/>
<dbReference type="HOGENOM" id="CLU_087168_1_0_1"/>
<dbReference type="InParanoid" id="Q9EQL5"/>
<dbReference type="OMA" id="CGCCGNQ"/>
<dbReference type="OrthoDB" id="9449742at2759"/>
<dbReference type="PhylomeDB" id="Q9EQL5"/>
<dbReference type="TreeFam" id="TF331371"/>
<dbReference type="PRO" id="PR:Q9EQL5"/>
<dbReference type="Proteomes" id="UP000002494">
    <property type="component" value="Chromosome 2"/>
</dbReference>
<dbReference type="Bgee" id="ENSRNOG00000016437">
    <property type="expression patterns" value="Expressed in duodenum and 16 other cell types or tissues"/>
</dbReference>
<dbReference type="GO" id="GO:0016020">
    <property type="term" value="C:membrane"/>
    <property type="evidence" value="ECO:0000318"/>
    <property type="project" value="GO_Central"/>
</dbReference>
<dbReference type="GO" id="GO:0042246">
    <property type="term" value="P:tissue regeneration"/>
    <property type="evidence" value="ECO:0000270"/>
    <property type="project" value="RGD"/>
</dbReference>
<dbReference type="InterPro" id="IPR008661">
    <property type="entry name" value="L6_membrane"/>
</dbReference>
<dbReference type="PANTHER" id="PTHR14198">
    <property type="entry name" value="TRANSMEMBRANE 4 L6 FAMILY MEMBER 1-RELATED"/>
    <property type="match status" value="1"/>
</dbReference>
<dbReference type="PANTHER" id="PTHR14198:SF15">
    <property type="entry name" value="TRANSMEMBRANE 4 L6 FAMILY MEMBER 4"/>
    <property type="match status" value="1"/>
</dbReference>
<dbReference type="Pfam" id="PF05805">
    <property type="entry name" value="L6_membrane"/>
    <property type="match status" value="1"/>
</dbReference>
<protein>
    <recommendedName>
        <fullName>Transmembrane 4 L6 family member 4</fullName>
    </recommendedName>
</protein>
<keyword id="KW-0325">Glycoprotein</keyword>
<keyword id="KW-0472">Membrane</keyword>
<keyword id="KW-1185">Reference proteome</keyword>
<keyword id="KW-0812">Transmembrane</keyword>
<keyword id="KW-1133">Transmembrane helix</keyword>
<name>T4S4_RAT</name>
<feature type="chain" id="PRO_0000219302" description="Transmembrane 4 L6 family member 4">
    <location>
        <begin position="1"/>
        <end position="202"/>
    </location>
</feature>
<feature type="topological domain" description="Cytoplasmic" evidence="2">
    <location>
        <begin position="1"/>
        <end position="9"/>
    </location>
</feature>
<feature type="transmembrane region" description="Helical" evidence="2">
    <location>
        <begin position="10"/>
        <end position="30"/>
    </location>
</feature>
<feature type="topological domain" description="Extracellular" evidence="2">
    <location>
        <begin position="31"/>
        <end position="48"/>
    </location>
</feature>
<feature type="transmembrane region" description="Helical" evidence="2">
    <location>
        <begin position="49"/>
        <end position="69"/>
    </location>
</feature>
<feature type="topological domain" description="Cytoplasmic" evidence="2">
    <location>
        <begin position="70"/>
        <end position="93"/>
    </location>
</feature>
<feature type="transmembrane region" description="Helical" evidence="2">
    <location>
        <begin position="94"/>
        <end position="114"/>
    </location>
</feature>
<feature type="topological domain" description="Extracellular" evidence="2">
    <location>
        <begin position="115"/>
        <end position="158"/>
    </location>
</feature>
<feature type="transmembrane region" description="Helical" evidence="2">
    <location>
        <begin position="159"/>
        <end position="179"/>
    </location>
</feature>
<feature type="topological domain" description="Cytoplasmic" evidence="2">
    <location>
        <begin position="180"/>
        <end position="202"/>
    </location>
</feature>
<feature type="glycosylation site" description="N-linked (GlcNAc...) asparagine" evidence="2">
    <location>
        <position position="156"/>
    </location>
</feature>
<sequence>MCTGGCARCLGGTLIPLAVFAVLANILLFFPGGKVVDDNSHLSDEVWYFGGILGSGVLMIFPALVFLGLQNNDCCGCCGNESCGKRFAMFTSTLFAVVGFLGAAYSFIVSAVSINKGPKCFMTNNTWGYPFHDGDYLNDQALWSKCEEPRDVVPWNLTLFSILLVIGGIQMVLCAIQVINGLLGTLCGDCQCCGCCGGDRPV</sequence>
<reference key="1">
    <citation type="journal article" date="2001" name="Biochim. Biophys. Acta">
        <title>Molecular cloning of a cDNA for rat TM4SF4, a homolog of human il-TMP (TM4SF4), and enhanced expression of the corresponding gene in regenerating rat liver.</title>
        <authorList>
            <person name="Liu Z.W."/>
            <person name="Zhao M.J."/>
            <person name="Yokoyama K.K."/>
            <person name="Li T.P."/>
        </authorList>
    </citation>
    <scope>NUCLEOTIDE SEQUENCE [MRNA]</scope>
    <scope>TISSUE SPECIFICITY</scope>
    <source>
        <strain>Sprague-Dawley</strain>
    </source>
</reference>
<reference key="2">
    <citation type="journal article" date="2004" name="Genome Res.">
        <title>The status, quality, and expansion of the NIH full-length cDNA project: the Mammalian Gene Collection (MGC).</title>
        <authorList>
            <consortium name="The MGC Project Team"/>
        </authorList>
    </citation>
    <scope>NUCLEOTIDE SEQUENCE [LARGE SCALE MRNA]</scope>
    <source>
        <tissue>Liver</tissue>
    </source>
</reference>
<organism>
    <name type="scientific">Rattus norvegicus</name>
    <name type="common">Rat</name>
    <dbReference type="NCBI Taxonomy" id="10116"/>
    <lineage>
        <taxon>Eukaryota</taxon>
        <taxon>Metazoa</taxon>
        <taxon>Chordata</taxon>
        <taxon>Craniata</taxon>
        <taxon>Vertebrata</taxon>
        <taxon>Euteleostomi</taxon>
        <taxon>Mammalia</taxon>
        <taxon>Eutheria</taxon>
        <taxon>Euarchontoglires</taxon>
        <taxon>Glires</taxon>
        <taxon>Rodentia</taxon>
        <taxon>Myomorpha</taxon>
        <taxon>Muroidea</taxon>
        <taxon>Muridae</taxon>
        <taxon>Murinae</taxon>
        <taxon>Rattus</taxon>
    </lineage>
</organism>
<evidence type="ECO:0000250" key="1"/>
<evidence type="ECO:0000255" key="2"/>
<evidence type="ECO:0000269" key="3">
    <source>
    </source>
</evidence>
<evidence type="ECO:0000305" key="4"/>